<evidence type="ECO:0000255" key="1">
    <source>
        <dbReference type="HAMAP-Rule" id="MF_01371"/>
    </source>
</evidence>
<evidence type="ECO:0000305" key="2"/>
<feature type="chain" id="PRO_1000144685" description="Large ribosomal subunit protein uL30">
    <location>
        <begin position="1"/>
        <end position="61"/>
    </location>
</feature>
<sequence>MAKLAVTLTRSMIGRPENQRVTTRTLGLRKMHQTVVVPDNAAMRGMINHVSHLLTVKEIQE</sequence>
<name>RL30_EXIS2</name>
<accession>B1YGW8</accession>
<comment type="subunit">
    <text evidence="1">Part of the 50S ribosomal subunit.</text>
</comment>
<comment type="similarity">
    <text evidence="1">Belongs to the universal ribosomal protein uL30 family.</text>
</comment>
<protein>
    <recommendedName>
        <fullName evidence="1">Large ribosomal subunit protein uL30</fullName>
    </recommendedName>
    <alternativeName>
        <fullName evidence="2">50S ribosomal protein L30</fullName>
    </alternativeName>
</protein>
<organism>
    <name type="scientific">Exiguobacterium sibiricum (strain DSM 17290 / CCUG 55495 / CIP 109462 / JCM 13490 / 255-15)</name>
    <dbReference type="NCBI Taxonomy" id="262543"/>
    <lineage>
        <taxon>Bacteria</taxon>
        <taxon>Bacillati</taxon>
        <taxon>Bacillota</taxon>
        <taxon>Bacilli</taxon>
        <taxon>Bacillales</taxon>
        <taxon>Bacillales Family XII. Incertae Sedis</taxon>
        <taxon>Exiguobacterium</taxon>
    </lineage>
</organism>
<keyword id="KW-1185">Reference proteome</keyword>
<keyword id="KW-0687">Ribonucleoprotein</keyword>
<keyword id="KW-0689">Ribosomal protein</keyword>
<dbReference type="EMBL" id="CP001022">
    <property type="protein sequence ID" value="ACB59601.1"/>
    <property type="molecule type" value="Genomic_DNA"/>
</dbReference>
<dbReference type="RefSeq" id="WP_012369027.1">
    <property type="nucleotide sequence ID" value="NC_010556.1"/>
</dbReference>
<dbReference type="SMR" id="B1YGW8"/>
<dbReference type="STRING" id="262543.Exig_0114"/>
<dbReference type="KEGG" id="esi:Exig_0114"/>
<dbReference type="eggNOG" id="COG1841">
    <property type="taxonomic scope" value="Bacteria"/>
</dbReference>
<dbReference type="HOGENOM" id="CLU_131047_2_1_9"/>
<dbReference type="OrthoDB" id="9812790at2"/>
<dbReference type="Proteomes" id="UP000001681">
    <property type="component" value="Chromosome"/>
</dbReference>
<dbReference type="GO" id="GO:0022625">
    <property type="term" value="C:cytosolic large ribosomal subunit"/>
    <property type="evidence" value="ECO:0007669"/>
    <property type="project" value="TreeGrafter"/>
</dbReference>
<dbReference type="GO" id="GO:0003735">
    <property type="term" value="F:structural constituent of ribosome"/>
    <property type="evidence" value="ECO:0007669"/>
    <property type="project" value="InterPro"/>
</dbReference>
<dbReference type="GO" id="GO:0006412">
    <property type="term" value="P:translation"/>
    <property type="evidence" value="ECO:0007669"/>
    <property type="project" value="UniProtKB-UniRule"/>
</dbReference>
<dbReference type="CDD" id="cd01658">
    <property type="entry name" value="Ribosomal_L30"/>
    <property type="match status" value="1"/>
</dbReference>
<dbReference type="FunFam" id="3.30.1390.20:FF:000001">
    <property type="entry name" value="50S ribosomal protein L30"/>
    <property type="match status" value="1"/>
</dbReference>
<dbReference type="Gene3D" id="3.30.1390.20">
    <property type="entry name" value="Ribosomal protein L30, ferredoxin-like fold domain"/>
    <property type="match status" value="1"/>
</dbReference>
<dbReference type="HAMAP" id="MF_01371_B">
    <property type="entry name" value="Ribosomal_uL30_B"/>
    <property type="match status" value="1"/>
</dbReference>
<dbReference type="InterPro" id="IPR036919">
    <property type="entry name" value="Ribo_uL30_ferredoxin-like_sf"/>
</dbReference>
<dbReference type="InterPro" id="IPR005996">
    <property type="entry name" value="Ribosomal_uL30_bac-type"/>
</dbReference>
<dbReference type="InterPro" id="IPR016082">
    <property type="entry name" value="Ribosomal_uL30_ferredoxin-like"/>
</dbReference>
<dbReference type="NCBIfam" id="TIGR01308">
    <property type="entry name" value="rpmD_bact"/>
    <property type="match status" value="1"/>
</dbReference>
<dbReference type="PANTHER" id="PTHR15892:SF2">
    <property type="entry name" value="LARGE RIBOSOMAL SUBUNIT PROTEIN UL30M"/>
    <property type="match status" value="1"/>
</dbReference>
<dbReference type="PANTHER" id="PTHR15892">
    <property type="entry name" value="MITOCHONDRIAL RIBOSOMAL PROTEIN L30"/>
    <property type="match status" value="1"/>
</dbReference>
<dbReference type="Pfam" id="PF00327">
    <property type="entry name" value="Ribosomal_L30"/>
    <property type="match status" value="1"/>
</dbReference>
<dbReference type="PIRSF" id="PIRSF002211">
    <property type="entry name" value="Ribosomal_L30_bac-type"/>
    <property type="match status" value="1"/>
</dbReference>
<dbReference type="SUPFAM" id="SSF55129">
    <property type="entry name" value="Ribosomal protein L30p/L7e"/>
    <property type="match status" value="1"/>
</dbReference>
<proteinExistence type="inferred from homology"/>
<reference key="1">
    <citation type="submission" date="2008-04" db="EMBL/GenBank/DDBJ databases">
        <title>Complete sequence of chromosome of Exiguobacterium sibiricum 255-15.</title>
        <authorList>
            <consortium name="US DOE Joint Genome Institute"/>
            <person name="Copeland A."/>
            <person name="Lucas S."/>
            <person name="Lapidus A."/>
            <person name="Glavina del Rio T."/>
            <person name="Dalin E."/>
            <person name="Tice H."/>
            <person name="Bruce D."/>
            <person name="Goodwin L."/>
            <person name="Pitluck S."/>
            <person name="Kiss H."/>
            <person name="Chertkov O."/>
            <person name="Monk C."/>
            <person name="Brettin T."/>
            <person name="Detter J.C."/>
            <person name="Han C."/>
            <person name="Kuske C.R."/>
            <person name="Schmutz J."/>
            <person name="Larimer F."/>
            <person name="Land M."/>
            <person name="Hauser L."/>
            <person name="Kyrpides N."/>
            <person name="Mikhailova N."/>
            <person name="Vishnivetskaya T."/>
            <person name="Rodrigues D.F."/>
            <person name="Gilichinsky D."/>
            <person name="Tiedje J."/>
            <person name="Richardson P."/>
        </authorList>
    </citation>
    <scope>NUCLEOTIDE SEQUENCE [LARGE SCALE GENOMIC DNA]</scope>
    <source>
        <strain>DSM 17290 / CCUG 55495 / CIP 109462 / JCM 13490 / 255-15</strain>
    </source>
</reference>
<gene>
    <name evidence="1" type="primary">rpmD</name>
    <name type="ordered locus">Exig_0114</name>
</gene>